<gene>
    <name evidence="1" type="primary">glyA</name>
    <name type="ordered locus">PH1654</name>
</gene>
<proteinExistence type="inferred from homology"/>
<protein>
    <recommendedName>
        <fullName evidence="1">Serine hydroxymethyltransferase</fullName>
        <shortName evidence="1">SHMT</shortName>
        <shortName evidence="1">Serine methylase</shortName>
        <ecNumber evidence="1">2.1.2.-</ecNumber>
    </recommendedName>
</protein>
<feature type="chain" id="PRO_0000113722" description="Serine hydroxymethyltransferase">
    <location>
        <begin position="1"/>
        <end position="427"/>
    </location>
</feature>
<feature type="binding site" evidence="1">
    <location>
        <begin position="120"/>
        <end position="122"/>
    </location>
    <ligand>
        <name>(6S)-5,6,7,8-tetrahydrofolate</name>
        <dbReference type="ChEBI" id="CHEBI:57453"/>
    </ligand>
</feature>
<feature type="site" description="Plays an important role in substrate specificity" evidence="1">
    <location>
        <position position="225"/>
    </location>
</feature>
<feature type="modified residue" description="N6-(pyridoxal phosphate)lysine" evidence="1">
    <location>
        <position position="226"/>
    </location>
</feature>
<sequence>MTYREYRDKVLHFIEEHEKWRSHTINLIASENITSPSVNRAVASGFMHKYAEGWPKQRYYQGCKYVDEVELIGVELFTKLFKSDYADLRPVSGTNANQAVFFGLGQPGDKVIVLHTSHGGHISHMPFGAAGMRGLEVHTWPFDFESFNIDVDKAEKMIRELEPKIVVFGGSLFPFPHPVKELAPVAKEVGAFVVYDAAHVLGLIAGGEFQDPLREGADIMTASTHKTFPGPQGGVILYKKFADDETIAKLQWAIFPGVVSNHHLHHMAGKVITAAEMLEYGEAYAKQIVKNAKALAEALAEEGFKVIGEDQGYTKSHQVIVDVSDLHPAGGGWAAPLLEEAGIILNKNLLPWDPLEKVNEPSGLRIGVQEMTRVGMMEDEMKEIAHFMKRVLIDKEDPKKVRKDVYYFRLEYQKVYYSFDYGLPMKE</sequence>
<dbReference type="EC" id="2.1.2.-" evidence="1"/>
<dbReference type="EMBL" id="BA000001">
    <property type="protein sequence ID" value="BAA30766.1"/>
    <property type="molecule type" value="Genomic_DNA"/>
</dbReference>
<dbReference type="PIR" id="F71045">
    <property type="entry name" value="F71045"/>
</dbReference>
<dbReference type="RefSeq" id="WP_010885721.1">
    <property type="nucleotide sequence ID" value="NC_000961.1"/>
</dbReference>
<dbReference type="SMR" id="O59347"/>
<dbReference type="STRING" id="70601.gene:9378647"/>
<dbReference type="EnsemblBacteria" id="BAA30766">
    <property type="protein sequence ID" value="BAA30766"/>
    <property type="gene ID" value="BAA30766"/>
</dbReference>
<dbReference type="GeneID" id="1442502"/>
<dbReference type="KEGG" id="pho:PH1654"/>
<dbReference type="eggNOG" id="arCOG00070">
    <property type="taxonomic scope" value="Archaea"/>
</dbReference>
<dbReference type="OrthoDB" id="5821at2157"/>
<dbReference type="UniPathway" id="UPA00288">
    <property type="reaction ID" value="UER01023"/>
</dbReference>
<dbReference type="Proteomes" id="UP000000752">
    <property type="component" value="Chromosome"/>
</dbReference>
<dbReference type="GO" id="GO:0005737">
    <property type="term" value="C:cytoplasm"/>
    <property type="evidence" value="ECO:0007669"/>
    <property type="project" value="UniProtKB-SubCell"/>
</dbReference>
<dbReference type="GO" id="GO:0004372">
    <property type="term" value="F:glycine hydroxymethyltransferase activity"/>
    <property type="evidence" value="ECO:0007669"/>
    <property type="project" value="UniProtKB-UniRule"/>
</dbReference>
<dbReference type="GO" id="GO:0030170">
    <property type="term" value="F:pyridoxal phosphate binding"/>
    <property type="evidence" value="ECO:0007669"/>
    <property type="project" value="UniProtKB-UniRule"/>
</dbReference>
<dbReference type="GO" id="GO:0019264">
    <property type="term" value="P:glycine biosynthetic process from serine"/>
    <property type="evidence" value="ECO:0007669"/>
    <property type="project" value="UniProtKB-UniRule"/>
</dbReference>
<dbReference type="GO" id="GO:0035999">
    <property type="term" value="P:tetrahydrofolate interconversion"/>
    <property type="evidence" value="ECO:0007669"/>
    <property type="project" value="InterPro"/>
</dbReference>
<dbReference type="CDD" id="cd00378">
    <property type="entry name" value="SHMT"/>
    <property type="match status" value="1"/>
</dbReference>
<dbReference type="FunFam" id="3.40.640.10:FF:000101">
    <property type="entry name" value="Serine hydroxymethyltransferase"/>
    <property type="match status" value="1"/>
</dbReference>
<dbReference type="FunFam" id="3.90.1150.10:FF:000114">
    <property type="entry name" value="Serine hydroxymethyltransferase"/>
    <property type="match status" value="1"/>
</dbReference>
<dbReference type="Gene3D" id="3.90.1150.10">
    <property type="entry name" value="Aspartate Aminotransferase, domain 1"/>
    <property type="match status" value="1"/>
</dbReference>
<dbReference type="Gene3D" id="3.40.640.10">
    <property type="entry name" value="Type I PLP-dependent aspartate aminotransferase-like (Major domain)"/>
    <property type="match status" value="1"/>
</dbReference>
<dbReference type="HAMAP" id="MF_00051">
    <property type="entry name" value="SHMT"/>
    <property type="match status" value="1"/>
</dbReference>
<dbReference type="InterPro" id="IPR015424">
    <property type="entry name" value="PyrdxlP-dep_Trfase"/>
</dbReference>
<dbReference type="InterPro" id="IPR015421">
    <property type="entry name" value="PyrdxlP-dep_Trfase_major"/>
</dbReference>
<dbReference type="InterPro" id="IPR015422">
    <property type="entry name" value="PyrdxlP-dep_Trfase_small"/>
</dbReference>
<dbReference type="InterPro" id="IPR001085">
    <property type="entry name" value="Ser_HO-MeTrfase"/>
</dbReference>
<dbReference type="InterPro" id="IPR049943">
    <property type="entry name" value="Ser_HO-MeTrfase-like"/>
</dbReference>
<dbReference type="InterPro" id="IPR019798">
    <property type="entry name" value="Ser_HO-MeTrfase_PLP_BS"/>
</dbReference>
<dbReference type="InterPro" id="IPR039429">
    <property type="entry name" value="SHMT-like_dom"/>
</dbReference>
<dbReference type="NCBIfam" id="NF000586">
    <property type="entry name" value="PRK00011.1"/>
    <property type="match status" value="1"/>
</dbReference>
<dbReference type="PANTHER" id="PTHR11680">
    <property type="entry name" value="SERINE HYDROXYMETHYLTRANSFERASE"/>
    <property type="match status" value="1"/>
</dbReference>
<dbReference type="PANTHER" id="PTHR11680:SF35">
    <property type="entry name" value="SERINE HYDROXYMETHYLTRANSFERASE 1"/>
    <property type="match status" value="1"/>
</dbReference>
<dbReference type="Pfam" id="PF00464">
    <property type="entry name" value="SHMT"/>
    <property type="match status" value="1"/>
</dbReference>
<dbReference type="PIRSF" id="PIRSF000412">
    <property type="entry name" value="SHMT"/>
    <property type="match status" value="1"/>
</dbReference>
<dbReference type="SUPFAM" id="SSF53383">
    <property type="entry name" value="PLP-dependent transferases"/>
    <property type="match status" value="1"/>
</dbReference>
<dbReference type="PROSITE" id="PS00096">
    <property type="entry name" value="SHMT"/>
    <property type="match status" value="1"/>
</dbReference>
<name>GLYA_PYRHO</name>
<accession>O59347</accession>
<comment type="function">
    <text evidence="1">Catalyzes the reversible interconversion of serine and glycine with a modified folate serving as the one-carbon carrier. Also exhibits a pteridine-independent aldolase activity toward beta-hydroxyamino acids, producing glycine and aldehydes, via a retro-aldol mechanism.</text>
</comment>
<comment type="cofactor">
    <cofactor evidence="1">
        <name>pyridoxal 5'-phosphate</name>
        <dbReference type="ChEBI" id="CHEBI:597326"/>
    </cofactor>
</comment>
<comment type="pathway">
    <text evidence="1">Amino-acid biosynthesis; glycine biosynthesis; glycine from L-serine: step 1/1.</text>
</comment>
<comment type="subunit">
    <text evidence="1">Homodimer.</text>
</comment>
<comment type="subcellular location">
    <subcellularLocation>
        <location evidence="1">Cytoplasm</location>
    </subcellularLocation>
</comment>
<comment type="similarity">
    <text evidence="1">Belongs to the SHMT family.</text>
</comment>
<evidence type="ECO:0000255" key="1">
    <source>
        <dbReference type="HAMAP-Rule" id="MF_00051"/>
    </source>
</evidence>
<keyword id="KW-0028">Amino-acid biosynthesis</keyword>
<keyword id="KW-0963">Cytoplasm</keyword>
<keyword id="KW-0554">One-carbon metabolism</keyword>
<keyword id="KW-0663">Pyridoxal phosphate</keyword>
<keyword id="KW-0808">Transferase</keyword>
<reference key="1">
    <citation type="journal article" date="1998" name="DNA Res.">
        <title>Complete sequence and gene organization of the genome of a hyper-thermophilic archaebacterium, Pyrococcus horikoshii OT3.</title>
        <authorList>
            <person name="Kawarabayasi Y."/>
            <person name="Sawada M."/>
            <person name="Horikawa H."/>
            <person name="Haikawa Y."/>
            <person name="Hino Y."/>
            <person name="Yamamoto S."/>
            <person name="Sekine M."/>
            <person name="Baba S."/>
            <person name="Kosugi H."/>
            <person name="Hosoyama A."/>
            <person name="Nagai Y."/>
            <person name="Sakai M."/>
            <person name="Ogura K."/>
            <person name="Otsuka R."/>
            <person name="Nakazawa H."/>
            <person name="Takamiya M."/>
            <person name="Ohfuku Y."/>
            <person name="Funahashi T."/>
            <person name="Tanaka T."/>
            <person name="Kudoh Y."/>
            <person name="Yamazaki J."/>
            <person name="Kushida N."/>
            <person name="Oguchi A."/>
            <person name="Aoki K."/>
            <person name="Yoshizawa T."/>
            <person name="Nakamura Y."/>
            <person name="Robb F.T."/>
            <person name="Horikoshi K."/>
            <person name="Masuchi Y."/>
            <person name="Shizuya H."/>
            <person name="Kikuchi H."/>
        </authorList>
    </citation>
    <scope>NUCLEOTIDE SEQUENCE [LARGE SCALE GENOMIC DNA]</scope>
    <source>
        <strain>ATCC 700860 / DSM 12428 / JCM 9974 / NBRC 100139 / OT-3</strain>
    </source>
</reference>
<organism>
    <name type="scientific">Pyrococcus horikoshii (strain ATCC 700860 / DSM 12428 / JCM 9974 / NBRC 100139 / OT-3)</name>
    <dbReference type="NCBI Taxonomy" id="70601"/>
    <lineage>
        <taxon>Archaea</taxon>
        <taxon>Methanobacteriati</taxon>
        <taxon>Methanobacteriota</taxon>
        <taxon>Thermococci</taxon>
        <taxon>Thermococcales</taxon>
        <taxon>Thermococcaceae</taxon>
        <taxon>Pyrococcus</taxon>
    </lineage>
</organism>